<keyword id="KW-0997">Cell inner membrane</keyword>
<keyword id="KW-1003">Cell membrane</keyword>
<keyword id="KW-0472">Membrane</keyword>
<keyword id="KW-0808">Transferase</keyword>
<keyword id="KW-0812">Transmembrane</keyword>
<keyword id="KW-1133">Transmembrane helix</keyword>
<accession>B0BTH4</accession>
<proteinExistence type="inferred from homology"/>
<feature type="chain" id="PRO_1000137395" description="Phosphatidylglycerol--prolipoprotein diacylglyceryl transferase">
    <location>
        <begin position="1"/>
        <end position="264"/>
    </location>
</feature>
<feature type="transmembrane region" description="Helical" evidence="1">
    <location>
        <begin position="14"/>
        <end position="34"/>
    </location>
</feature>
<feature type="transmembrane region" description="Helical" evidence="1">
    <location>
        <begin position="60"/>
        <end position="80"/>
    </location>
</feature>
<feature type="transmembrane region" description="Helical" evidence="1">
    <location>
        <begin position="98"/>
        <end position="118"/>
    </location>
</feature>
<feature type="transmembrane region" description="Helical" evidence="1">
    <location>
        <begin position="128"/>
        <end position="148"/>
    </location>
</feature>
<feature type="transmembrane region" description="Helical" evidence="1">
    <location>
        <begin position="176"/>
        <end position="196"/>
    </location>
</feature>
<feature type="transmembrane region" description="Helical" evidence="1">
    <location>
        <begin position="203"/>
        <end position="223"/>
    </location>
</feature>
<feature type="transmembrane region" description="Helical" evidence="1">
    <location>
        <begin position="240"/>
        <end position="260"/>
    </location>
</feature>
<feature type="binding site" evidence="1">
    <location>
        <position position="143"/>
    </location>
    <ligand>
        <name>a 1,2-diacyl-sn-glycero-3-phospho-(1'-sn-glycerol)</name>
        <dbReference type="ChEBI" id="CHEBI:64716"/>
    </ligand>
</feature>
<comment type="function">
    <text evidence="1">Catalyzes the transfer of the diacylglyceryl group from phosphatidylglycerol to the sulfhydryl group of the N-terminal cysteine of a prolipoprotein, the first step in the formation of mature lipoproteins.</text>
</comment>
<comment type="catalytic activity">
    <reaction evidence="1">
        <text>L-cysteinyl-[prolipoprotein] + a 1,2-diacyl-sn-glycero-3-phospho-(1'-sn-glycerol) = an S-1,2-diacyl-sn-glyceryl-L-cysteinyl-[prolipoprotein] + sn-glycerol 1-phosphate + H(+)</text>
        <dbReference type="Rhea" id="RHEA:56712"/>
        <dbReference type="Rhea" id="RHEA-COMP:14679"/>
        <dbReference type="Rhea" id="RHEA-COMP:14680"/>
        <dbReference type="ChEBI" id="CHEBI:15378"/>
        <dbReference type="ChEBI" id="CHEBI:29950"/>
        <dbReference type="ChEBI" id="CHEBI:57685"/>
        <dbReference type="ChEBI" id="CHEBI:64716"/>
        <dbReference type="ChEBI" id="CHEBI:140658"/>
        <dbReference type="EC" id="2.5.1.145"/>
    </reaction>
</comment>
<comment type="pathway">
    <text evidence="1">Protein modification; lipoprotein biosynthesis (diacylglyceryl transfer).</text>
</comment>
<comment type="subcellular location">
    <subcellularLocation>
        <location evidence="1">Cell inner membrane</location>
        <topology evidence="1">Multi-pass membrane protein</topology>
    </subcellularLocation>
</comment>
<comment type="similarity">
    <text evidence="1">Belongs to the Lgt family.</text>
</comment>
<reference key="1">
    <citation type="journal article" date="2008" name="PLoS ONE">
        <title>Genome biology of Actinobacillus pleuropneumoniae JL03, an isolate of serotype 3 prevalent in China.</title>
        <authorList>
            <person name="Xu Z."/>
            <person name="Zhou Y."/>
            <person name="Li L."/>
            <person name="Zhou R."/>
            <person name="Xiao S."/>
            <person name="Wan Y."/>
            <person name="Zhang S."/>
            <person name="Wang K."/>
            <person name="Li W."/>
            <person name="Li L."/>
            <person name="Jin H."/>
            <person name="Kang M."/>
            <person name="Dalai B."/>
            <person name="Li T."/>
            <person name="Liu L."/>
            <person name="Cheng Y."/>
            <person name="Zhang L."/>
            <person name="Xu T."/>
            <person name="Zheng H."/>
            <person name="Pu S."/>
            <person name="Wang B."/>
            <person name="Gu W."/>
            <person name="Zhang X.L."/>
            <person name="Zhu G.-F."/>
            <person name="Wang S."/>
            <person name="Zhao G.-P."/>
            <person name="Chen H."/>
        </authorList>
    </citation>
    <scope>NUCLEOTIDE SEQUENCE [LARGE SCALE GENOMIC DNA]</scope>
    <source>
        <strain>JL03</strain>
    </source>
</reference>
<evidence type="ECO:0000255" key="1">
    <source>
        <dbReference type="HAMAP-Rule" id="MF_01147"/>
    </source>
</evidence>
<sequence length="264" mass="30342">MNEQFIQFPQIDPIIFSIGPIALRWYGLMYLIGFGFAYWLGMRRAKNSNGVWTTEQVDQLIYTCFWGVILGGRIGDVFFYNFDRLLQDPMFLFRIWEGGMSFHGGLIGVIVAMIWVSFRQKRSFWNTADFIAPLIPFGLGMGRIGNFINDELWGRITDVPWAVLFPSGGYLPRHPSQLYEFFLEGVVLFFILNWFIKKPRPAGSVAGLFLIGYGVFRFLVEYVRDIDPNVNTVDDLITRGQLLSLPMIIGGLAIMIWAYSRKKA</sequence>
<dbReference type="EC" id="2.5.1.145" evidence="1"/>
<dbReference type="EMBL" id="CP000687">
    <property type="protein sequence ID" value="ABY70488.1"/>
    <property type="molecule type" value="Genomic_DNA"/>
</dbReference>
<dbReference type="RefSeq" id="WP_005599596.1">
    <property type="nucleotide sequence ID" value="NC_010278.1"/>
</dbReference>
<dbReference type="SMR" id="B0BTH4"/>
<dbReference type="GeneID" id="48600199"/>
<dbReference type="KEGG" id="apj:APJL_1938"/>
<dbReference type="HOGENOM" id="CLU_013386_1_0_6"/>
<dbReference type="UniPathway" id="UPA00664"/>
<dbReference type="Proteomes" id="UP000008547">
    <property type="component" value="Chromosome"/>
</dbReference>
<dbReference type="GO" id="GO:0005886">
    <property type="term" value="C:plasma membrane"/>
    <property type="evidence" value="ECO:0007669"/>
    <property type="project" value="UniProtKB-SubCell"/>
</dbReference>
<dbReference type="GO" id="GO:0008961">
    <property type="term" value="F:phosphatidylglycerol-prolipoprotein diacylglyceryl transferase activity"/>
    <property type="evidence" value="ECO:0007669"/>
    <property type="project" value="UniProtKB-UniRule"/>
</dbReference>
<dbReference type="GO" id="GO:0042158">
    <property type="term" value="P:lipoprotein biosynthetic process"/>
    <property type="evidence" value="ECO:0007669"/>
    <property type="project" value="UniProtKB-UniRule"/>
</dbReference>
<dbReference type="HAMAP" id="MF_01147">
    <property type="entry name" value="Lgt"/>
    <property type="match status" value="1"/>
</dbReference>
<dbReference type="InterPro" id="IPR001640">
    <property type="entry name" value="Lgt"/>
</dbReference>
<dbReference type="NCBIfam" id="TIGR00544">
    <property type="entry name" value="lgt"/>
    <property type="match status" value="1"/>
</dbReference>
<dbReference type="PANTHER" id="PTHR30589:SF0">
    <property type="entry name" value="PHOSPHATIDYLGLYCEROL--PROLIPOPROTEIN DIACYLGLYCERYL TRANSFERASE"/>
    <property type="match status" value="1"/>
</dbReference>
<dbReference type="PANTHER" id="PTHR30589">
    <property type="entry name" value="PROLIPOPROTEIN DIACYLGLYCERYL TRANSFERASE"/>
    <property type="match status" value="1"/>
</dbReference>
<dbReference type="Pfam" id="PF01790">
    <property type="entry name" value="LGT"/>
    <property type="match status" value="1"/>
</dbReference>
<dbReference type="PROSITE" id="PS01311">
    <property type="entry name" value="LGT"/>
    <property type="match status" value="1"/>
</dbReference>
<protein>
    <recommendedName>
        <fullName evidence="1">Phosphatidylglycerol--prolipoprotein diacylglyceryl transferase</fullName>
        <ecNumber evidence="1">2.5.1.145</ecNumber>
    </recommendedName>
</protein>
<name>LGT_ACTPJ</name>
<gene>
    <name evidence="1" type="primary">lgt</name>
    <name type="ordered locus">APJL_1938</name>
</gene>
<organism>
    <name type="scientific">Actinobacillus pleuropneumoniae serotype 3 (strain JL03)</name>
    <dbReference type="NCBI Taxonomy" id="434271"/>
    <lineage>
        <taxon>Bacteria</taxon>
        <taxon>Pseudomonadati</taxon>
        <taxon>Pseudomonadota</taxon>
        <taxon>Gammaproteobacteria</taxon>
        <taxon>Pasteurellales</taxon>
        <taxon>Pasteurellaceae</taxon>
        <taxon>Actinobacillus</taxon>
    </lineage>
</organism>